<accession>B3QYV9</accession>
<organism>
    <name type="scientific">Chloroherpeton thalassium (strain ATCC 35110 / GB-78)</name>
    <dbReference type="NCBI Taxonomy" id="517418"/>
    <lineage>
        <taxon>Bacteria</taxon>
        <taxon>Pseudomonadati</taxon>
        <taxon>Chlorobiota</taxon>
        <taxon>Chlorobiia</taxon>
        <taxon>Chlorobiales</taxon>
        <taxon>Chloroherpetonaceae</taxon>
        <taxon>Chloroherpeton</taxon>
    </lineage>
</organism>
<protein>
    <recommendedName>
        <fullName evidence="1">Large ribosomal subunit protein bL34</fullName>
    </recommendedName>
    <alternativeName>
        <fullName evidence="3">50S ribosomal protein L34</fullName>
    </alternativeName>
</protein>
<comment type="similarity">
    <text evidence="1">Belongs to the bacterial ribosomal protein bL34 family.</text>
</comment>
<gene>
    <name evidence="1" type="primary">rpmH</name>
    <name type="ordered locus">Ctha_2733</name>
</gene>
<name>RL34_CHLT3</name>
<dbReference type="EMBL" id="CP001100">
    <property type="protein sequence ID" value="ACF15182.1"/>
    <property type="molecule type" value="Genomic_DNA"/>
</dbReference>
<dbReference type="RefSeq" id="WP_012501264.1">
    <property type="nucleotide sequence ID" value="NC_011026.1"/>
</dbReference>
<dbReference type="SMR" id="B3QYV9"/>
<dbReference type="STRING" id="517418.Ctha_2733"/>
<dbReference type="KEGG" id="cts:Ctha_2733"/>
<dbReference type="eggNOG" id="COG0230">
    <property type="taxonomic scope" value="Bacteria"/>
</dbReference>
<dbReference type="HOGENOM" id="CLU_129938_2_0_10"/>
<dbReference type="OrthoDB" id="9804164at2"/>
<dbReference type="Proteomes" id="UP000001208">
    <property type="component" value="Chromosome"/>
</dbReference>
<dbReference type="GO" id="GO:1990904">
    <property type="term" value="C:ribonucleoprotein complex"/>
    <property type="evidence" value="ECO:0007669"/>
    <property type="project" value="UniProtKB-KW"/>
</dbReference>
<dbReference type="GO" id="GO:0005840">
    <property type="term" value="C:ribosome"/>
    <property type="evidence" value="ECO:0007669"/>
    <property type="project" value="UniProtKB-KW"/>
</dbReference>
<dbReference type="GO" id="GO:0003735">
    <property type="term" value="F:structural constituent of ribosome"/>
    <property type="evidence" value="ECO:0007669"/>
    <property type="project" value="InterPro"/>
</dbReference>
<dbReference type="GO" id="GO:0006412">
    <property type="term" value="P:translation"/>
    <property type="evidence" value="ECO:0007669"/>
    <property type="project" value="UniProtKB-UniRule"/>
</dbReference>
<dbReference type="FunFam" id="1.10.287.3980:FF:000001">
    <property type="entry name" value="Mitochondrial ribosomal protein L34"/>
    <property type="match status" value="1"/>
</dbReference>
<dbReference type="Gene3D" id="1.10.287.3980">
    <property type="match status" value="1"/>
</dbReference>
<dbReference type="HAMAP" id="MF_00391">
    <property type="entry name" value="Ribosomal_bL34"/>
    <property type="match status" value="1"/>
</dbReference>
<dbReference type="InterPro" id="IPR000271">
    <property type="entry name" value="Ribosomal_bL34"/>
</dbReference>
<dbReference type="InterPro" id="IPR020939">
    <property type="entry name" value="Ribosomal_bL34_CS"/>
</dbReference>
<dbReference type="NCBIfam" id="TIGR01030">
    <property type="entry name" value="rpmH_bact"/>
    <property type="match status" value="1"/>
</dbReference>
<dbReference type="PANTHER" id="PTHR14503:SF4">
    <property type="entry name" value="LARGE RIBOSOMAL SUBUNIT PROTEIN BL34M"/>
    <property type="match status" value="1"/>
</dbReference>
<dbReference type="PANTHER" id="PTHR14503">
    <property type="entry name" value="MITOCHONDRIAL RIBOSOMAL PROTEIN 34 FAMILY MEMBER"/>
    <property type="match status" value="1"/>
</dbReference>
<dbReference type="Pfam" id="PF00468">
    <property type="entry name" value="Ribosomal_L34"/>
    <property type="match status" value="1"/>
</dbReference>
<dbReference type="PROSITE" id="PS00784">
    <property type="entry name" value="RIBOSOMAL_L34"/>
    <property type="match status" value="1"/>
</dbReference>
<feature type="chain" id="PRO_1000196023" description="Large ribosomal subunit protein bL34">
    <location>
        <begin position="1"/>
        <end position="52"/>
    </location>
</feature>
<feature type="region of interest" description="Disordered" evidence="2">
    <location>
        <begin position="1"/>
        <end position="52"/>
    </location>
</feature>
<feature type="compositionally biased region" description="Basic residues" evidence="2">
    <location>
        <begin position="1"/>
        <end position="19"/>
    </location>
</feature>
<feature type="compositionally biased region" description="Basic residues" evidence="2">
    <location>
        <begin position="26"/>
        <end position="42"/>
    </location>
</feature>
<feature type="compositionally biased region" description="Polar residues" evidence="2">
    <location>
        <begin position="43"/>
        <end position="52"/>
    </location>
</feature>
<sequence>MKRTYQPHNRKRRNKHGFRSRMATKNGRKVLSARRAKGRHRLTVSSETSNKK</sequence>
<evidence type="ECO:0000255" key="1">
    <source>
        <dbReference type="HAMAP-Rule" id="MF_00391"/>
    </source>
</evidence>
<evidence type="ECO:0000256" key="2">
    <source>
        <dbReference type="SAM" id="MobiDB-lite"/>
    </source>
</evidence>
<evidence type="ECO:0000305" key="3"/>
<keyword id="KW-1185">Reference proteome</keyword>
<keyword id="KW-0687">Ribonucleoprotein</keyword>
<keyword id="KW-0689">Ribosomal protein</keyword>
<proteinExistence type="inferred from homology"/>
<reference key="1">
    <citation type="submission" date="2008-06" db="EMBL/GenBank/DDBJ databases">
        <title>Complete sequence of Chloroherpeton thalassium ATCC 35110.</title>
        <authorList>
            <consortium name="US DOE Joint Genome Institute"/>
            <person name="Lucas S."/>
            <person name="Copeland A."/>
            <person name="Lapidus A."/>
            <person name="Glavina del Rio T."/>
            <person name="Dalin E."/>
            <person name="Tice H."/>
            <person name="Bruce D."/>
            <person name="Goodwin L."/>
            <person name="Pitluck S."/>
            <person name="Schmutz J."/>
            <person name="Larimer F."/>
            <person name="Land M."/>
            <person name="Hauser L."/>
            <person name="Kyrpides N."/>
            <person name="Mikhailova N."/>
            <person name="Liu Z."/>
            <person name="Li T."/>
            <person name="Zhao F."/>
            <person name="Overmann J."/>
            <person name="Bryant D.A."/>
            <person name="Richardson P."/>
        </authorList>
    </citation>
    <scope>NUCLEOTIDE SEQUENCE [LARGE SCALE GENOMIC DNA]</scope>
    <source>
        <strain>ATCC 35110 / GB-78</strain>
    </source>
</reference>